<dbReference type="EC" id="6.3.1.13" evidence="1"/>
<dbReference type="EMBL" id="CP001737">
    <property type="protein sequence ID" value="ACV79126.1"/>
    <property type="molecule type" value="Genomic_DNA"/>
</dbReference>
<dbReference type="RefSeq" id="WP_015748005.1">
    <property type="nucleotide sequence ID" value="NC_013235.1"/>
</dbReference>
<dbReference type="SMR" id="C8X8S1"/>
<dbReference type="STRING" id="479431.Namu_2780"/>
<dbReference type="KEGG" id="nml:Namu_2780"/>
<dbReference type="eggNOG" id="COG0215">
    <property type="taxonomic scope" value="Bacteria"/>
</dbReference>
<dbReference type="HOGENOM" id="CLU_013528_0_0_11"/>
<dbReference type="InParanoid" id="C8X8S1"/>
<dbReference type="OrthoDB" id="9815130at2"/>
<dbReference type="Proteomes" id="UP000002218">
    <property type="component" value="Chromosome"/>
</dbReference>
<dbReference type="GO" id="GO:0005829">
    <property type="term" value="C:cytosol"/>
    <property type="evidence" value="ECO:0007669"/>
    <property type="project" value="TreeGrafter"/>
</dbReference>
<dbReference type="GO" id="GO:0005524">
    <property type="term" value="F:ATP binding"/>
    <property type="evidence" value="ECO:0007669"/>
    <property type="project" value="UniProtKB-KW"/>
</dbReference>
<dbReference type="GO" id="GO:0035446">
    <property type="term" value="F:cysteine-glucosaminylinositol ligase activity"/>
    <property type="evidence" value="ECO:0007669"/>
    <property type="project" value="UniProtKB-UniRule"/>
</dbReference>
<dbReference type="GO" id="GO:0004817">
    <property type="term" value="F:cysteine-tRNA ligase activity"/>
    <property type="evidence" value="ECO:0007669"/>
    <property type="project" value="TreeGrafter"/>
</dbReference>
<dbReference type="GO" id="GO:0008270">
    <property type="term" value="F:zinc ion binding"/>
    <property type="evidence" value="ECO:0007669"/>
    <property type="project" value="UniProtKB-UniRule"/>
</dbReference>
<dbReference type="GO" id="GO:0006423">
    <property type="term" value="P:cysteinyl-tRNA aminoacylation"/>
    <property type="evidence" value="ECO:0007669"/>
    <property type="project" value="TreeGrafter"/>
</dbReference>
<dbReference type="GO" id="GO:0010125">
    <property type="term" value="P:mycothiol biosynthetic process"/>
    <property type="evidence" value="ECO:0007669"/>
    <property type="project" value="UniProtKB-UniRule"/>
</dbReference>
<dbReference type="CDD" id="cd00672">
    <property type="entry name" value="CysRS_core"/>
    <property type="match status" value="1"/>
</dbReference>
<dbReference type="FunFam" id="3.40.50.620:FF:000134">
    <property type="entry name" value="L-cysteine:1D-myo-inositol 2-amino-2-deoxy-alpha-D-glucopyranoside ligase"/>
    <property type="match status" value="1"/>
</dbReference>
<dbReference type="Gene3D" id="1.20.120.640">
    <property type="entry name" value="Anticodon-binding domain of a subclass of class I aminoacyl-tRNA synthetases"/>
    <property type="match status" value="1"/>
</dbReference>
<dbReference type="Gene3D" id="3.40.50.620">
    <property type="entry name" value="HUPs"/>
    <property type="match status" value="1"/>
</dbReference>
<dbReference type="HAMAP" id="MF_01697">
    <property type="entry name" value="MshC"/>
    <property type="match status" value="1"/>
</dbReference>
<dbReference type="InterPro" id="IPR024909">
    <property type="entry name" value="Cys-tRNA/MSH_ligase"/>
</dbReference>
<dbReference type="InterPro" id="IPR017812">
    <property type="entry name" value="Mycothiol_ligase_MshC"/>
</dbReference>
<dbReference type="InterPro" id="IPR014729">
    <property type="entry name" value="Rossmann-like_a/b/a_fold"/>
</dbReference>
<dbReference type="InterPro" id="IPR032678">
    <property type="entry name" value="tRNA-synt_1_cat_dom"/>
</dbReference>
<dbReference type="NCBIfam" id="TIGR03447">
    <property type="entry name" value="mycothiol_MshC"/>
    <property type="match status" value="1"/>
</dbReference>
<dbReference type="PANTHER" id="PTHR10890:SF3">
    <property type="entry name" value="CYSTEINE--TRNA LIGASE, CYTOPLASMIC"/>
    <property type="match status" value="1"/>
</dbReference>
<dbReference type="PANTHER" id="PTHR10890">
    <property type="entry name" value="CYSTEINYL-TRNA SYNTHETASE"/>
    <property type="match status" value="1"/>
</dbReference>
<dbReference type="Pfam" id="PF01406">
    <property type="entry name" value="tRNA-synt_1e"/>
    <property type="match status" value="1"/>
</dbReference>
<dbReference type="PRINTS" id="PR00983">
    <property type="entry name" value="TRNASYNTHCYS"/>
</dbReference>
<dbReference type="SUPFAM" id="SSF52374">
    <property type="entry name" value="Nucleotidylyl transferase"/>
    <property type="match status" value="1"/>
</dbReference>
<keyword id="KW-0067">ATP-binding</keyword>
<keyword id="KW-0436">Ligase</keyword>
<keyword id="KW-0479">Metal-binding</keyword>
<keyword id="KW-0547">Nucleotide-binding</keyword>
<keyword id="KW-1185">Reference proteome</keyword>
<keyword id="KW-0862">Zinc</keyword>
<evidence type="ECO:0000255" key="1">
    <source>
        <dbReference type="HAMAP-Rule" id="MF_01697"/>
    </source>
</evidence>
<protein>
    <recommendedName>
        <fullName evidence="1">L-cysteine:1D-myo-inositol 2-amino-2-deoxy-alpha-D-glucopyranoside ligase</fullName>
        <shortName evidence="1">L-Cys:GlcN-Ins ligase</shortName>
        <ecNumber evidence="1">6.3.1.13</ecNumber>
    </recommendedName>
    <alternativeName>
        <fullName evidence="1">Mycothiol ligase</fullName>
        <shortName evidence="1">MSH ligase</shortName>
    </alternativeName>
</protein>
<organism>
    <name type="scientific">Nakamurella multipartita (strain ATCC 700099 / DSM 44233 / CIP 104796 / JCM 9543 / NBRC 105858 / Y-104)</name>
    <name type="common">Microsphaera multipartita</name>
    <dbReference type="NCBI Taxonomy" id="479431"/>
    <lineage>
        <taxon>Bacteria</taxon>
        <taxon>Bacillati</taxon>
        <taxon>Actinomycetota</taxon>
        <taxon>Actinomycetes</taxon>
        <taxon>Nakamurellales</taxon>
        <taxon>Nakamurellaceae</taxon>
        <taxon>Nakamurella</taxon>
    </lineage>
</organism>
<reference key="1">
    <citation type="submission" date="2009-09" db="EMBL/GenBank/DDBJ databases">
        <title>The complete genome of Nakamurella multipartita DSM 44233.</title>
        <authorList>
            <consortium name="US DOE Joint Genome Institute (JGI-PGF)"/>
            <person name="Lucas S."/>
            <person name="Copeland A."/>
            <person name="Lapidus A."/>
            <person name="Glavina del Rio T."/>
            <person name="Dalin E."/>
            <person name="Tice H."/>
            <person name="Bruce D."/>
            <person name="Goodwin L."/>
            <person name="Pitluck S."/>
            <person name="Kyrpides N."/>
            <person name="Mavromatis K."/>
            <person name="Ivanova N."/>
            <person name="Ovchinnikova G."/>
            <person name="Sims D."/>
            <person name="Meincke L."/>
            <person name="Brettin T."/>
            <person name="Detter J.C."/>
            <person name="Han C."/>
            <person name="Larimer F."/>
            <person name="Land M."/>
            <person name="Hauser L."/>
            <person name="Markowitz V."/>
            <person name="Cheng J.-F."/>
            <person name="Hugenholtz P."/>
            <person name="Woyke T."/>
            <person name="Wu D."/>
            <person name="Klenk H.-P."/>
            <person name="Eisen J.A."/>
        </authorList>
    </citation>
    <scope>NUCLEOTIDE SEQUENCE [LARGE SCALE GENOMIC DNA]</scope>
    <source>
        <strain>ATCC 700099 / DSM 44233 / CIP 104796 / JCM 9543 / NBRC 105858 / Y-104</strain>
    </source>
</reference>
<feature type="chain" id="PRO_0000400471" description="L-cysteine:1D-myo-inositol 2-amino-2-deoxy-alpha-D-glucopyranoside ligase">
    <location>
        <begin position="1"/>
        <end position="405"/>
    </location>
</feature>
<feature type="short sequence motif" description="'HIGH' region" evidence="1">
    <location>
        <begin position="45"/>
        <end position="55"/>
    </location>
</feature>
<feature type="short sequence motif" description="'ERGGDP' region" evidence="1">
    <location>
        <begin position="187"/>
        <end position="192"/>
    </location>
</feature>
<feature type="short sequence motif" description="'KMSKS' region" evidence="1">
    <location>
        <begin position="289"/>
        <end position="293"/>
    </location>
</feature>
<feature type="binding site" evidence="1">
    <location>
        <begin position="43"/>
        <end position="46"/>
    </location>
    <ligand>
        <name>L-cysteinyl-5'-AMP</name>
        <dbReference type="ChEBI" id="CHEBI:144924"/>
    </ligand>
</feature>
<feature type="binding site" evidence="1">
    <location>
        <position position="43"/>
    </location>
    <ligand>
        <name>Zn(2+)</name>
        <dbReference type="ChEBI" id="CHEBI:29105"/>
    </ligand>
</feature>
<feature type="binding site" evidence="1">
    <location>
        <position position="58"/>
    </location>
    <ligand>
        <name>L-cysteinyl-5'-AMP</name>
        <dbReference type="ChEBI" id="CHEBI:144924"/>
    </ligand>
</feature>
<feature type="binding site" evidence="1">
    <location>
        <begin position="81"/>
        <end position="83"/>
    </location>
    <ligand>
        <name>L-cysteinyl-5'-AMP</name>
        <dbReference type="ChEBI" id="CHEBI:144924"/>
    </ligand>
</feature>
<feature type="binding site" evidence="1">
    <location>
        <position position="227"/>
    </location>
    <ligand>
        <name>L-cysteinyl-5'-AMP</name>
        <dbReference type="ChEBI" id="CHEBI:144924"/>
    </ligand>
</feature>
<feature type="binding site" evidence="1">
    <location>
        <position position="231"/>
    </location>
    <ligand>
        <name>Zn(2+)</name>
        <dbReference type="ChEBI" id="CHEBI:29105"/>
    </ligand>
</feature>
<feature type="binding site" evidence="1">
    <location>
        <begin position="249"/>
        <end position="251"/>
    </location>
    <ligand>
        <name>L-cysteinyl-5'-AMP</name>
        <dbReference type="ChEBI" id="CHEBI:144924"/>
    </ligand>
</feature>
<feature type="binding site" evidence="1">
    <location>
        <position position="256"/>
    </location>
    <ligand>
        <name>Zn(2+)</name>
        <dbReference type="ChEBI" id="CHEBI:29105"/>
    </ligand>
</feature>
<feature type="binding site" evidence="1">
    <location>
        <position position="283"/>
    </location>
    <ligand>
        <name>L-cysteinyl-5'-AMP</name>
        <dbReference type="ChEBI" id="CHEBI:144924"/>
    </ligand>
</feature>
<accession>C8X8S1</accession>
<gene>
    <name evidence="1" type="primary">mshC</name>
    <name type="ordered locus">Namu_2780</name>
</gene>
<comment type="function">
    <text evidence="1">Catalyzes the ATP-dependent condensation of GlcN-Ins and L-cysteine to form L-Cys-GlcN-Ins.</text>
</comment>
<comment type="catalytic activity">
    <reaction evidence="1">
        <text>1D-myo-inositol 2-amino-2-deoxy-alpha-D-glucopyranoside + L-cysteine + ATP = 1D-myo-inositol 2-(L-cysteinylamino)-2-deoxy-alpha-D-glucopyranoside + AMP + diphosphate + H(+)</text>
        <dbReference type="Rhea" id="RHEA:26176"/>
        <dbReference type="ChEBI" id="CHEBI:15378"/>
        <dbReference type="ChEBI" id="CHEBI:30616"/>
        <dbReference type="ChEBI" id="CHEBI:33019"/>
        <dbReference type="ChEBI" id="CHEBI:35235"/>
        <dbReference type="ChEBI" id="CHEBI:58886"/>
        <dbReference type="ChEBI" id="CHEBI:58887"/>
        <dbReference type="ChEBI" id="CHEBI:456215"/>
        <dbReference type="EC" id="6.3.1.13"/>
    </reaction>
</comment>
<comment type="cofactor">
    <cofactor evidence="1">
        <name>Zn(2+)</name>
        <dbReference type="ChEBI" id="CHEBI:29105"/>
    </cofactor>
    <text evidence="1">Binds 1 zinc ion per subunit.</text>
</comment>
<comment type="subunit">
    <text evidence="1">Monomer.</text>
</comment>
<comment type="similarity">
    <text evidence="1">Belongs to the class-I aminoacyl-tRNA synthetase family. MshC subfamily.</text>
</comment>
<proteinExistence type="inferred from homology"/>
<name>MSHC_NAKMY</name>
<sequence length="405" mass="44183">MQSWPSPPVPGIPGTGRPLRLYDSATGEVRPTDPGPVATMYVCGITPYDATHLGHAATYLAFDLVHRMWLDAGHQVHYVQNITDIDDPLLERAQRDGVSWRKLADREIGLFRDDMTALRVIPPADYIGAVEAMDEVTAAVQELIDAGAAYRVPDEQYPDVYFDVTASGQFGYESRYDEATMLRLSAERGGDPDRPGKRQRLDPLLWRVERPQEPSWSSPMGPGRPGWHIECAVIAGNRIGPVIDLQGGGSDLIFPHHECSAAHAEVLSGKRPFARHYTHAGMIGLDGEKMSKSRGNLVFVSRLLHQGVDPMAMRLGLLAGHYRQDRAWSDEVLTAAEARLARWRAAAARTGVDADSVVQAIRDGLADDLDTPTVIEALDAWAADETLDGSAVAAAVDALLGVRLV</sequence>